<comment type="function">
    <text evidence="3">Histone demethylase that specifically demethylates 'Lys-4' of histone H3, thereby playing a central role in histone code. Does not demethylate histone H3 'Lys-9', H3 'Lys-27', H3 'Lys-36', H3 'Lys-79' or H4 'Lys-20'. Demethylates trimethylated and dimethylated but not monomethylated H3 'Lys-4'. Participates in transcriptional repression of neuronal genes by recruiting histone deacetylases and REST at neuron-restrictive silencer elements (By similarity).</text>
</comment>
<comment type="catalytic activity">
    <reaction evidence="3">
        <text>N(6),N(6),N(6)-trimethyl-L-lysyl(4)-[histone H3] + 3 2-oxoglutarate + 3 O2 = L-lysyl(4)-[histone H3] + 3 formaldehyde + 3 succinate + 3 CO2</text>
        <dbReference type="Rhea" id="RHEA:60208"/>
        <dbReference type="Rhea" id="RHEA-COMP:15537"/>
        <dbReference type="Rhea" id="RHEA-COMP:15547"/>
        <dbReference type="ChEBI" id="CHEBI:15379"/>
        <dbReference type="ChEBI" id="CHEBI:16526"/>
        <dbReference type="ChEBI" id="CHEBI:16810"/>
        <dbReference type="ChEBI" id="CHEBI:16842"/>
        <dbReference type="ChEBI" id="CHEBI:29969"/>
        <dbReference type="ChEBI" id="CHEBI:30031"/>
        <dbReference type="ChEBI" id="CHEBI:61961"/>
        <dbReference type="EC" id="1.14.11.67"/>
    </reaction>
</comment>
<comment type="cofactor">
    <cofactor evidence="3">
        <name>Fe(2+)</name>
        <dbReference type="ChEBI" id="CHEBI:29033"/>
    </cofactor>
    <text evidence="3">Binds 1 Fe(2+) ion per subunit.</text>
</comment>
<comment type="subunit">
    <text evidence="3">Part of two distinct complexes, one containing E2F6, and the other containing REST. Interacts with ZMYND8.</text>
</comment>
<comment type="subcellular location">
    <subcellularLocation>
        <location evidence="6 7">Nucleus</location>
    </subcellularLocation>
</comment>
<comment type="domain">
    <text evidence="1">The first PHD-type zinc finger domain recognizes and binds H3-K9Me3.</text>
</comment>
<comment type="domain">
    <text evidence="1">Both the JmjC domain and the JmjN domain are required for enzymatic activity.</text>
</comment>
<comment type="similarity">
    <text evidence="10">Belongs to the JARID1 histone demethylase family.</text>
</comment>
<gene>
    <name type="primary">KDM5C</name>
    <name type="synonym">JARID1C</name>
    <name type="synonym">SMCX</name>
</gene>
<dbReference type="EC" id="1.14.11.67" evidence="3"/>
<dbReference type="EMBL" id="EF139241">
    <property type="protein sequence ID" value="ABL74503.1"/>
    <property type="molecule type" value="mRNA"/>
</dbReference>
<dbReference type="RefSeq" id="NP_001090902.1">
    <property type="nucleotide sequence ID" value="NM_001097433.1"/>
</dbReference>
<dbReference type="BMRB" id="A1YVX4"/>
<dbReference type="SMR" id="A1YVX4"/>
<dbReference type="FunCoup" id="A1YVX4">
    <property type="interactions" value="2087"/>
</dbReference>
<dbReference type="STRING" id="9823.ENSSSCP00000013112"/>
<dbReference type="GlyGen" id="A1YVX4">
    <property type="glycosylation" value="2 sites"/>
</dbReference>
<dbReference type="PaxDb" id="9823-ENSSSCP00000013112"/>
<dbReference type="GeneID" id="100037295"/>
<dbReference type="KEGG" id="ssc:100037295"/>
<dbReference type="CTD" id="8242"/>
<dbReference type="eggNOG" id="KOG1246">
    <property type="taxonomic scope" value="Eukaryota"/>
</dbReference>
<dbReference type="InParanoid" id="A1YVX4"/>
<dbReference type="OrthoDB" id="1678912at2759"/>
<dbReference type="BRENDA" id="1.14.11.67">
    <property type="organism ID" value="6170"/>
</dbReference>
<dbReference type="Proteomes" id="UP000008227">
    <property type="component" value="Unplaced"/>
</dbReference>
<dbReference type="Proteomes" id="UP000314985">
    <property type="component" value="Unplaced"/>
</dbReference>
<dbReference type="Proteomes" id="UP000694570">
    <property type="component" value="Unplaced"/>
</dbReference>
<dbReference type="Proteomes" id="UP000694571">
    <property type="component" value="Unplaced"/>
</dbReference>
<dbReference type="Proteomes" id="UP000694720">
    <property type="component" value="Unplaced"/>
</dbReference>
<dbReference type="Proteomes" id="UP000694722">
    <property type="component" value="Unplaced"/>
</dbReference>
<dbReference type="Proteomes" id="UP000694723">
    <property type="component" value="Unplaced"/>
</dbReference>
<dbReference type="Proteomes" id="UP000694724">
    <property type="component" value="Unplaced"/>
</dbReference>
<dbReference type="Proteomes" id="UP000694725">
    <property type="component" value="Unplaced"/>
</dbReference>
<dbReference type="Proteomes" id="UP000694726">
    <property type="component" value="Unplaced"/>
</dbReference>
<dbReference type="Proteomes" id="UP000694727">
    <property type="component" value="Unplaced"/>
</dbReference>
<dbReference type="Proteomes" id="UP000694728">
    <property type="component" value="Unplaced"/>
</dbReference>
<dbReference type="GO" id="GO:0000785">
    <property type="term" value="C:chromatin"/>
    <property type="evidence" value="ECO:0000318"/>
    <property type="project" value="GO_Central"/>
</dbReference>
<dbReference type="GO" id="GO:0005634">
    <property type="term" value="C:nucleus"/>
    <property type="evidence" value="ECO:0000318"/>
    <property type="project" value="GO_Central"/>
</dbReference>
<dbReference type="GO" id="GO:0003677">
    <property type="term" value="F:DNA binding"/>
    <property type="evidence" value="ECO:0007669"/>
    <property type="project" value="InterPro"/>
</dbReference>
<dbReference type="GO" id="GO:0034647">
    <property type="term" value="F:histone H3K4me/H3K4me2/H3K4me3 demethylase activity"/>
    <property type="evidence" value="ECO:0000318"/>
    <property type="project" value="GO_Central"/>
</dbReference>
<dbReference type="GO" id="GO:0008270">
    <property type="term" value="F:zinc ion binding"/>
    <property type="evidence" value="ECO:0007669"/>
    <property type="project" value="UniProtKB-KW"/>
</dbReference>
<dbReference type="GO" id="GO:0006338">
    <property type="term" value="P:chromatin remodeling"/>
    <property type="evidence" value="ECO:0000318"/>
    <property type="project" value="GO_Central"/>
</dbReference>
<dbReference type="GO" id="GO:0006355">
    <property type="term" value="P:regulation of DNA-templated transcription"/>
    <property type="evidence" value="ECO:0000318"/>
    <property type="project" value="GO_Central"/>
</dbReference>
<dbReference type="CDD" id="cd15604">
    <property type="entry name" value="PHD1_KDM5C_5D"/>
    <property type="match status" value="1"/>
</dbReference>
<dbReference type="FunFam" id="2.60.120.650:FF:000031">
    <property type="entry name" value="lysine-specific demethylase 5C isoform X10"/>
    <property type="match status" value="1"/>
</dbReference>
<dbReference type="FunFam" id="3.30.40.10:FF:000072">
    <property type="entry name" value="lysine-specific demethylase 5C isoform X2"/>
    <property type="match status" value="1"/>
</dbReference>
<dbReference type="FunFam" id="3.30.40.10:FF:000651">
    <property type="entry name" value="Lysine-specific demethylase 5D"/>
    <property type="match status" value="1"/>
</dbReference>
<dbReference type="FunFam" id="2.60.120.650:FF:000001">
    <property type="entry name" value="Putative lysine-specific demethylase 5b"/>
    <property type="match status" value="1"/>
</dbReference>
<dbReference type="Gene3D" id="2.60.120.650">
    <property type="entry name" value="Cupin"/>
    <property type="match status" value="2"/>
</dbReference>
<dbReference type="Gene3D" id="3.30.40.10">
    <property type="entry name" value="Zinc/RING finger domain, C3HC4 (zinc finger)"/>
    <property type="match status" value="2"/>
</dbReference>
<dbReference type="InterPro" id="IPR001606">
    <property type="entry name" value="ARID_dom"/>
</dbReference>
<dbReference type="InterPro" id="IPR036431">
    <property type="entry name" value="ARID_dom_sf"/>
</dbReference>
<dbReference type="InterPro" id="IPR003347">
    <property type="entry name" value="JmjC_dom"/>
</dbReference>
<dbReference type="InterPro" id="IPR003349">
    <property type="entry name" value="JmjN"/>
</dbReference>
<dbReference type="InterPro" id="IPR048615">
    <property type="entry name" value="KDM5_C-hel"/>
</dbReference>
<dbReference type="InterPro" id="IPR013637">
    <property type="entry name" value="Lys_sp_deMease-like_dom"/>
</dbReference>
<dbReference type="InterPro" id="IPR019786">
    <property type="entry name" value="Zinc_finger_PHD-type_CS"/>
</dbReference>
<dbReference type="InterPro" id="IPR004198">
    <property type="entry name" value="Znf_C5HC2"/>
</dbReference>
<dbReference type="InterPro" id="IPR011011">
    <property type="entry name" value="Znf_FYVE_PHD"/>
</dbReference>
<dbReference type="InterPro" id="IPR001965">
    <property type="entry name" value="Znf_PHD"/>
</dbReference>
<dbReference type="InterPro" id="IPR019787">
    <property type="entry name" value="Znf_PHD-finger"/>
</dbReference>
<dbReference type="InterPro" id="IPR013083">
    <property type="entry name" value="Znf_RING/FYVE/PHD"/>
</dbReference>
<dbReference type="PANTHER" id="PTHR10694">
    <property type="entry name" value="LYSINE-SPECIFIC DEMETHYLASE"/>
    <property type="match status" value="1"/>
</dbReference>
<dbReference type="PANTHER" id="PTHR10694:SF43">
    <property type="entry name" value="LYSINE-SPECIFIC DEMETHYLASE 5C"/>
    <property type="match status" value="1"/>
</dbReference>
<dbReference type="Pfam" id="PF01388">
    <property type="entry name" value="ARID"/>
    <property type="match status" value="1"/>
</dbReference>
<dbReference type="Pfam" id="PF02373">
    <property type="entry name" value="JmjC"/>
    <property type="match status" value="1"/>
</dbReference>
<dbReference type="Pfam" id="PF02375">
    <property type="entry name" value="JmjN"/>
    <property type="match status" value="1"/>
</dbReference>
<dbReference type="Pfam" id="PF21323">
    <property type="entry name" value="KDM5_C-hel"/>
    <property type="match status" value="1"/>
</dbReference>
<dbReference type="Pfam" id="PF00628">
    <property type="entry name" value="PHD"/>
    <property type="match status" value="1"/>
</dbReference>
<dbReference type="Pfam" id="PF08429">
    <property type="entry name" value="PLU-1"/>
    <property type="match status" value="1"/>
</dbReference>
<dbReference type="Pfam" id="PF02928">
    <property type="entry name" value="zf-C5HC2"/>
    <property type="match status" value="1"/>
</dbReference>
<dbReference type="SMART" id="SM01014">
    <property type="entry name" value="ARID"/>
    <property type="match status" value="1"/>
</dbReference>
<dbReference type="SMART" id="SM00501">
    <property type="entry name" value="BRIGHT"/>
    <property type="match status" value="1"/>
</dbReference>
<dbReference type="SMART" id="SM00558">
    <property type="entry name" value="JmjC"/>
    <property type="match status" value="1"/>
</dbReference>
<dbReference type="SMART" id="SM00545">
    <property type="entry name" value="JmjN"/>
    <property type="match status" value="1"/>
</dbReference>
<dbReference type="SMART" id="SM00249">
    <property type="entry name" value="PHD"/>
    <property type="match status" value="2"/>
</dbReference>
<dbReference type="SUPFAM" id="SSF46774">
    <property type="entry name" value="ARID-like"/>
    <property type="match status" value="1"/>
</dbReference>
<dbReference type="SUPFAM" id="SSF51197">
    <property type="entry name" value="Clavaminate synthase-like"/>
    <property type="match status" value="1"/>
</dbReference>
<dbReference type="SUPFAM" id="SSF57903">
    <property type="entry name" value="FYVE/PHD zinc finger"/>
    <property type="match status" value="2"/>
</dbReference>
<dbReference type="PROSITE" id="PS51011">
    <property type="entry name" value="ARID"/>
    <property type="match status" value="1"/>
</dbReference>
<dbReference type="PROSITE" id="PS51184">
    <property type="entry name" value="JMJC"/>
    <property type="match status" value="1"/>
</dbReference>
<dbReference type="PROSITE" id="PS51183">
    <property type="entry name" value="JMJN"/>
    <property type="match status" value="1"/>
</dbReference>
<dbReference type="PROSITE" id="PS01359">
    <property type="entry name" value="ZF_PHD_1"/>
    <property type="match status" value="2"/>
</dbReference>
<dbReference type="PROSITE" id="PS50016">
    <property type="entry name" value="ZF_PHD_2"/>
    <property type="match status" value="1"/>
</dbReference>
<reference key="1">
    <citation type="submission" date="2006-11" db="EMBL/GenBank/DDBJ databases">
        <authorList>
            <person name="Yi L."/>
            <person name="Xu Y."/>
        </authorList>
    </citation>
    <scope>NUCLEOTIDE SEQUENCE [LARGE SCALE MRNA]</scope>
</reference>
<sequence>MEPGSDDFLPPPECPVFEPSWAEFRDPLGYIAKIRPIAEKSGICKIRPPADWQPPFAVEVDNFRFTPRIQRLNELEIVVEEGGYEAICKDRRWARVAQRLNYPPGKNIGSLLRSHYERIVYPYEMYQSGANLVQCNTRPFDNEEKDKEYKPHSIPLRQSVQPSKFNSYGRRAKRLQPDPEPTEEDIEKNPELKKLQIYGAGPKMMGLGLMAKDKTLRKKDKEGPECPPTVVVKEESGGDVKVESTSPKTFLESKEELSHSPEPCTKMTMRLRRNHSNAQFIESYVCRMCSRGDEDDKLLLCDGCDDNYHIFCLLPPLPEIPKGVWRCPKCVMAECKRPPEAFGFEQATREYTLQSFGEMADSFKADYSNMPVHMVPTELVEKEFWRLVNSIEEDVTVEYGADIHSKEFGSGFPVSDSKRHLTPEEEEYATSGWNLNVMPVLEQSVLCHINADISGMKVPWLYVGMVFSAFCWHIEDHWSYSINYLHWGEPKTWYGVPSLAAEHLEEVMKKLTPELFDSQPDLLHQLVTLMNPNTLMSHGVPVVRTNQCAGEFVITFPRAYHSGFNQGYNFAEAVNFCTADWLPAGRQCIEHYRRLRRYCVFSHEELICKMAACPEKLDLNLAAAVHKEMFIMVQEERRLRKALLEKGITEAEREAFELLPDDERQCIKCKTTCFLSALACYDCPDGLVCLSHINDLCKCSSSRQYLRYRYTLDELPAMLHKLKVRAESFDTWANKVRVALEVEDGRKRSLEELRALESEARERRFPNSELLQRLKNCLSEAEACVSRALGLVSGQEAGPHRVAGLQMTLAELRAFLDQMNNLPCAMHQIGDVKGILEQVEAYQAEAREALASLPSSPGLLQSLLERGRQLGVEVPEAQQLQRQVEQARWLDEVKRTLAPSARRGTLAVMRGLLVAGASVAPSPAVDKAQAELQELLTIAERWEEKAHLCLEARQKHPPATLEAIIHEAENIPVHLPNIQALKEALAKARAWIADVDEIQNGDHYPCLDDLEGLVAVGRDLPVGLEELRQLELQVLTAHSWREKASKTFLKKNSCYTLLEVLCPCADAGSDSTKRSRWMEKELGLYKSDTELLGLSAQDLRDPGSVIVAFKEGEQKEKEGILQLRRTNSAKPSPLASPNTSSSATSICVCGQVPAGVGALQCDLCQDWFHGRCVSVPRLLSSPRPSPTSSPLLAWWEWDTKFLCPLCMRSRRPRLETILALLVALQRLPVRLPEGEALQCLTERAISWQGRARQALAFEDVTALLGRLAELRQRLQAEPRPEEPPTYPSTPAFDPLREGSGKDMPKVQGLLENGDSVTSPEKVAPGEGSDLELLSSLLPQLTGPVLELPEATRAPLEELMLEGDLLEVTLDENHSIWQLLQAGKPPDLARIRTLLELEKAERHGSRARGRALERRRRRKVDRGGEGDDPAREELEPKRVRSSWPEAEEAHEEEELEEETGGEGPPQPLPATGSPSTQENQNGLEPALGASSGSSVPFSTLTPRLHMSCPQQPPQQQL</sequence>
<feature type="chain" id="PRO_0000292417" description="Lysine-specific demethylase 5C">
    <location>
        <begin position="1"/>
        <end position="1516"/>
    </location>
</feature>
<feature type="domain" description="JmjN" evidence="7">
    <location>
        <begin position="14"/>
        <end position="55"/>
    </location>
</feature>
<feature type="domain" description="ARID" evidence="6">
    <location>
        <begin position="24"/>
        <end position="128"/>
    </location>
</feature>
<feature type="domain" description="JmjC" evidence="8">
    <location>
        <begin position="427"/>
        <end position="593"/>
    </location>
</feature>
<feature type="zinc finger region" description="PHD-type 1" evidence="5">
    <location>
        <begin position="283"/>
        <end position="333"/>
    </location>
</feature>
<feature type="zinc finger region" description="C5HC2" evidence="2">
    <location>
        <begin position="666"/>
        <end position="718"/>
    </location>
</feature>
<feature type="zinc finger region" description="PHD-type 2" evidence="5">
    <location>
        <begin position="1144"/>
        <end position="1209"/>
    </location>
</feature>
<feature type="region of interest" description="Disordered" evidence="9">
    <location>
        <begin position="142"/>
        <end position="186"/>
    </location>
</feature>
<feature type="region of interest" description="Disordered" evidence="9">
    <location>
        <begin position="216"/>
        <end position="262"/>
    </location>
</feature>
<feature type="region of interest" description="Disordered" evidence="9">
    <location>
        <begin position="1274"/>
        <end position="1305"/>
    </location>
</feature>
<feature type="region of interest" description="Disordered" evidence="9">
    <location>
        <begin position="1400"/>
        <end position="1516"/>
    </location>
</feature>
<feature type="compositionally biased region" description="Basic and acidic residues" evidence="9">
    <location>
        <begin position="142"/>
        <end position="151"/>
    </location>
</feature>
<feature type="compositionally biased region" description="Polar residues" evidence="9">
    <location>
        <begin position="156"/>
        <end position="166"/>
    </location>
</feature>
<feature type="compositionally biased region" description="Basic and acidic residues" evidence="9">
    <location>
        <begin position="232"/>
        <end position="242"/>
    </location>
</feature>
<feature type="compositionally biased region" description="Basic and acidic residues" evidence="9">
    <location>
        <begin position="1294"/>
        <end position="1304"/>
    </location>
</feature>
<feature type="compositionally biased region" description="Basic residues" evidence="9">
    <location>
        <begin position="1404"/>
        <end position="1419"/>
    </location>
</feature>
<feature type="compositionally biased region" description="Basic and acidic residues" evidence="9">
    <location>
        <begin position="1420"/>
        <end position="1437"/>
    </location>
</feature>
<feature type="compositionally biased region" description="Acidic residues" evidence="9">
    <location>
        <begin position="1444"/>
        <end position="1459"/>
    </location>
</feature>
<feature type="compositionally biased region" description="Polar residues" evidence="9">
    <location>
        <begin position="1471"/>
        <end position="1481"/>
    </location>
</feature>
<feature type="compositionally biased region" description="Polar residues" evidence="9">
    <location>
        <begin position="1489"/>
        <end position="1500"/>
    </location>
</feature>
<feature type="binding site" evidence="2">
    <location>
        <position position="399"/>
    </location>
    <ligand>
        <name>2-oxoglutarate</name>
        <dbReference type="ChEBI" id="CHEBI:16810"/>
    </ligand>
</feature>
<feature type="binding site" evidence="8">
    <location>
        <position position="473"/>
    </location>
    <ligand>
        <name>Fe cation</name>
        <dbReference type="ChEBI" id="CHEBI:24875"/>
        <note>catalytic</note>
    </ligand>
</feature>
<feature type="binding site" evidence="2">
    <location>
        <position position="475"/>
    </location>
    <ligand>
        <name>Fe cation</name>
        <dbReference type="ChEBI" id="CHEBI:24875"/>
        <note>catalytic</note>
    </ligand>
</feature>
<feature type="binding site" evidence="2">
    <location>
        <position position="481"/>
    </location>
    <ligand>
        <name>2-oxoglutarate</name>
        <dbReference type="ChEBI" id="CHEBI:16810"/>
    </ligand>
</feature>
<feature type="binding site" evidence="2">
    <location>
        <position position="483"/>
    </location>
    <ligand>
        <name>2-oxoglutarate</name>
        <dbReference type="ChEBI" id="CHEBI:16810"/>
    </ligand>
</feature>
<feature type="binding site" evidence="2">
    <location>
        <position position="491"/>
    </location>
    <ligand>
        <name>2-oxoglutarate</name>
        <dbReference type="ChEBI" id="CHEBI:16810"/>
    </ligand>
</feature>
<feature type="binding site" evidence="8">
    <location>
        <position position="561"/>
    </location>
    <ligand>
        <name>Fe cation</name>
        <dbReference type="ChEBI" id="CHEBI:24875"/>
        <note>catalytic</note>
    </ligand>
</feature>
<feature type="modified residue" description="Phosphoserine" evidence="3">
    <location>
        <position position="246"/>
    </location>
</feature>
<feature type="modified residue" description="Phosphoserine" evidence="3">
    <location>
        <position position="260"/>
    </location>
</feature>
<feature type="modified residue" description="Phosphoserine" evidence="3">
    <location>
        <position position="276"/>
    </location>
</feature>
<feature type="modified residue" description="Phosphoserine" evidence="4">
    <location>
        <position position="852"/>
    </location>
</feature>
<feature type="modified residue" description="Phosphoserine" evidence="3">
    <location>
        <position position="856"/>
    </location>
</feature>
<feature type="modified residue" description="Phosphoserine" evidence="3">
    <location>
        <position position="1318"/>
    </location>
</feature>
<feature type="cross-link" description="Glycyl lysine isopeptide (Lys-Gly) (interchain with G-Cter in SUMO2)" evidence="3">
    <location>
        <position position="164"/>
    </location>
</feature>
<feature type="cross-link" description="Glycyl lysine isopeptide (Lys-Gly) (interchain with G-Cter in SUMO2)" evidence="3">
    <location>
        <position position="188"/>
    </location>
</feature>
<feature type="cross-link" description="Glycyl lysine isopeptide (Lys-Gly) (interchain with G-Cter in SUMO2)" evidence="3">
    <location>
        <position position="203"/>
    </location>
</feature>
<feature type="cross-link" description="Glycyl lysine isopeptide (Lys-Gly) (interchain with G-Cter in SUMO2)" evidence="3">
    <location>
        <position position="233"/>
    </location>
</feature>
<feature type="cross-link" description="Glycyl lysine isopeptide (Lys-Gly) (interchain with G-Cter in SUMO2)" evidence="3">
    <location>
        <position position="254"/>
    </location>
</feature>
<feature type="cross-link" description="Glycyl lysine isopeptide (Lys-Gly) (interchain with G-Cter in SUMO2)" evidence="3">
    <location>
        <position position="1086"/>
    </location>
</feature>
<proteinExistence type="evidence at transcript level"/>
<accession>A1YVX4</accession>
<name>KDM5C_PIG</name>
<organism>
    <name type="scientific">Sus scrofa</name>
    <name type="common">Pig</name>
    <dbReference type="NCBI Taxonomy" id="9823"/>
    <lineage>
        <taxon>Eukaryota</taxon>
        <taxon>Metazoa</taxon>
        <taxon>Chordata</taxon>
        <taxon>Craniata</taxon>
        <taxon>Vertebrata</taxon>
        <taxon>Euteleostomi</taxon>
        <taxon>Mammalia</taxon>
        <taxon>Eutheria</taxon>
        <taxon>Laurasiatheria</taxon>
        <taxon>Artiodactyla</taxon>
        <taxon>Suina</taxon>
        <taxon>Suidae</taxon>
        <taxon>Sus</taxon>
    </lineage>
</organism>
<keyword id="KW-0156">Chromatin regulator</keyword>
<keyword id="KW-0223">Dioxygenase</keyword>
<keyword id="KW-0408">Iron</keyword>
<keyword id="KW-1017">Isopeptide bond</keyword>
<keyword id="KW-0479">Metal-binding</keyword>
<keyword id="KW-0539">Nucleus</keyword>
<keyword id="KW-0560">Oxidoreductase</keyword>
<keyword id="KW-0597">Phosphoprotein</keyword>
<keyword id="KW-1185">Reference proteome</keyword>
<keyword id="KW-0677">Repeat</keyword>
<keyword id="KW-0804">Transcription</keyword>
<keyword id="KW-0805">Transcription regulation</keyword>
<keyword id="KW-0832">Ubl conjugation</keyword>
<keyword id="KW-0862">Zinc</keyword>
<keyword id="KW-0863">Zinc-finger</keyword>
<evidence type="ECO:0000250" key="1"/>
<evidence type="ECO:0000250" key="2">
    <source>
        <dbReference type="UniProtKB" id="P29375"/>
    </source>
</evidence>
<evidence type="ECO:0000250" key="3">
    <source>
        <dbReference type="UniProtKB" id="P41229"/>
    </source>
</evidence>
<evidence type="ECO:0000250" key="4">
    <source>
        <dbReference type="UniProtKB" id="P41230"/>
    </source>
</evidence>
<evidence type="ECO:0000255" key="5">
    <source>
        <dbReference type="PROSITE-ProRule" id="PRU00146"/>
    </source>
</evidence>
<evidence type="ECO:0000255" key="6">
    <source>
        <dbReference type="PROSITE-ProRule" id="PRU00355"/>
    </source>
</evidence>
<evidence type="ECO:0000255" key="7">
    <source>
        <dbReference type="PROSITE-ProRule" id="PRU00537"/>
    </source>
</evidence>
<evidence type="ECO:0000255" key="8">
    <source>
        <dbReference type="PROSITE-ProRule" id="PRU00538"/>
    </source>
</evidence>
<evidence type="ECO:0000256" key="9">
    <source>
        <dbReference type="SAM" id="MobiDB-lite"/>
    </source>
</evidence>
<evidence type="ECO:0000305" key="10"/>
<protein>
    <recommendedName>
        <fullName>Lysine-specific demethylase 5C</fullName>
        <ecNumber evidence="3">1.14.11.67</ecNumber>
    </recommendedName>
    <alternativeName>
        <fullName>Histone demethylase JARID1C</fullName>
    </alternativeName>
    <alternativeName>
        <fullName>Jumonji/ARID domain-containing protein 1C</fullName>
    </alternativeName>
    <alternativeName>
        <fullName>Protein SmcX</fullName>
    </alternativeName>
    <alternativeName>
        <fullName evidence="10">[histone H3]-trimethyl-L-lysine(4) demethylase 5C</fullName>
    </alternativeName>
</protein>